<evidence type="ECO:0000255" key="1">
    <source>
        <dbReference type="HAMAP-Rule" id="MF_00270"/>
    </source>
</evidence>
<evidence type="ECO:0000305" key="2"/>
<name>RS18_PASMU</name>
<keyword id="KW-1185">Reference proteome</keyword>
<keyword id="KW-0687">Ribonucleoprotein</keyword>
<keyword id="KW-0689">Ribosomal protein</keyword>
<keyword id="KW-0694">RNA-binding</keyword>
<keyword id="KW-0699">rRNA-binding</keyword>
<dbReference type="EMBL" id="AE004439">
    <property type="protein sequence ID" value="AAK03262.1"/>
    <property type="molecule type" value="Genomic_DNA"/>
</dbReference>
<dbReference type="RefSeq" id="WP_005717555.1">
    <property type="nucleotide sequence ID" value="NC_002663.1"/>
</dbReference>
<dbReference type="SMR" id="P57916"/>
<dbReference type="STRING" id="272843.PM1178"/>
<dbReference type="EnsemblBacteria" id="AAK03262">
    <property type="protein sequence ID" value="AAK03262"/>
    <property type="gene ID" value="PM1178"/>
</dbReference>
<dbReference type="GeneID" id="77206493"/>
<dbReference type="KEGG" id="pmu:PM1178"/>
<dbReference type="HOGENOM" id="CLU_148710_2_2_6"/>
<dbReference type="OrthoDB" id="9812008at2"/>
<dbReference type="Proteomes" id="UP000000809">
    <property type="component" value="Chromosome"/>
</dbReference>
<dbReference type="GO" id="GO:0022627">
    <property type="term" value="C:cytosolic small ribosomal subunit"/>
    <property type="evidence" value="ECO:0007669"/>
    <property type="project" value="TreeGrafter"/>
</dbReference>
<dbReference type="GO" id="GO:0070181">
    <property type="term" value="F:small ribosomal subunit rRNA binding"/>
    <property type="evidence" value="ECO:0007669"/>
    <property type="project" value="TreeGrafter"/>
</dbReference>
<dbReference type="GO" id="GO:0003735">
    <property type="term" value="F:structural constituent of ribosome"/>
    <property type="evidence" value="ECO:0007669"/>
    <property type="project" value="InterPro"/>
</dbReference>
<dbReference type="GO" id="GO:0006412">
    <property type="term" value="P:translation"/>
    <property type="evidence" value="ECO:0007669"/>
    <property type="project" value="UniProtKB-UniRule"/>
</dbReference>
<dbReference type="FunFam" id="4.10.640.10:FF:000001">
    <property type="entry name" value="30S ribosomal protein S18"/>
    <property type="match status" value="1"/>
</dbReference>
<dbReference type="Gene3D" id="4.10.640.10">
    <property type="entry name" value="Ribosomal protein S18"/>
    <property type="match status" value="1"/>
</dbReference>
<dbReference type="HAMAP" id="MF_00270">
    <property type="entry name" value="Ribosomal_bS18"/>
    <property type="match status" value="1"/>
</dbReference>
<dbReference type="InterPro" id="IPR001648">
    <property type="entry name" value="Ribosomal_bS18"/>
</dbReference>
<dbReference type="InterPro" id="IPR018275">
    <property type="entry name" value="Ribosomal_bS18_CS"/>
</dbReference>
<dbReference type="InterPro" id="IPR036870">
    <property type="entry name" value="Ribosomal_bS18_sf"/>
</dbReference>
<dbReference type="NCBIfam" id="TIGR00165">
    <property type="entry name" value="S18"/>
    <property type="match status" value="1"/>
</dbReference>
<dbReference type="PANTHER" id="PTHR13479">
    <property type="entry name" value="30S RIBOSOMAL PROTEIN S18"/>
    <property type="match status" value="1"/>
</dbReference>
<dbReference type="PANTHER" id="PTHR13479:SF40">
    <property type="entry name" value="SMALL RIBOSOMAL SUBUNIT PROTEIN BS18M"/>
    <property type="match status" value="1"/>
</dbReference>
<dbReference type="Pfam" id="PF01084">
    <property type="entry name" value="Ribosomal_S18"/>
    <property type="match status" value="1"/>
</dbReference>
<dbReference type="PRINTS" id="PR00974">
    <property type="entry name" value="RIBOSOMALS18"/>
</dbReference>
<dbReference type="SUPFAM" id="SSF46911">
    <property type="entry name" value="Ribosomal protein S18"/>
    <property type="match status" value="1"/>
</dbReference>
<dbReference type="PROSITE" id="PS00057">
    <property type="entry name" value="RIBOSOMAL_S18"/>
    <property type="match status" value="1"/>
</dbReference>
<proteinExistence type="inferred from homology"/>
<accession>P57916</accession>
<protein>
    <recommendedName>
        <fullName evidence="1">Small ribosomal subunit protein bS18</fullName>
    </recommendedName>
    <alternativeName>
        <fullName evidence="2">30S ribosomal protein S18</fullName>
    </alternativeName>
</protein>
<feature type="chain" id="PRO_0000111201" description="Small ribosomal subunit protein bS18">
    <location>
        <begin position="1"/>
        <end position="75"/>
    </location>
</feature>
<gene>
    <name evidence="1" type="primary">rpsR</name>
    <name evidence="1" type="synonym">rps18</name>
    <name type="ordered locus">PM1178</name>
</gene>
<organism>
    <name type="scientific">Pasteurella multocida (strain Pm70)</name>
    <dbReference type="NCBI Taxonomy" id="272843"/>
    <lineage>
        <taxon>Bacteria</taxon>
        <taxon>Pseudomonadati</taxon>
        <taxon>Pseudomonadota</taxon>
        <taxon>Gammaproteobacteria</taxon>
        <taxon>Pasteurellales</taxon>
        <taxon>Pasteurellaceae</taxon>
        <taxon>Pasteurella</taxon>
    </lineage>
</organism>
<comment type="function">
    <text evidence="1">Binds as a heterodimer with protein bS6 to the central domain of the 16S rRNA, where it helps stabilize the platform of the 30S subunit.</text>
</comment>
<comment type="subunit">
    <text evidence="1">Part of the 30S ribosomal subunit. Forms a tight heterodimer with protein bS6.</text>
</comment>
<comment type="similarity">
    <text evidence="1">Belongs to the bacterial ribosomal protein bS18 family.</text>
</comment>
<reference key="1">
    <citation type="journal article" date="2001" name="Proc. Natl. Acad. Sci. U.S.A.">
        <title>Complete genomic sequence of Pasteurella multocida Pm70.</title>
        <authorList>
            <person name="May B.J."/>
            <person name="Zhang Q."/>
            <person name="Li L.L."/>
            <person name="Paustian M.L."/>
            <person name="Whittam T.S."/>
            <person name="Kapur V."/>
        </authorList>
    </citation>
    <scope>NUCLEOTIDE SEQUENCE [LARGE SCALE GENOMIC DNA]</scope>
    <source>
        <strain>Pm70</strain>
    </source>
</reference>
<sequence length="75" mass="8942">MARYFRRRKFCRFTAENVVEIDYKDVATLKNYITESGKIVPSRITGTRAKYQRQLARAIKRARYLALLPYTDNHQ</sequence>